<dbReference type="EMBL" id="AF487270">
    <property type="protein sequence ID" value="AAQ06243.1"/>
    <property type="molecule type" value="mRNA"/>
</dbReference>
<dbReference type="EMBL" id="AC011623">
    <property type="protein sequence ID" value="AAF08576.1"/>
    <property type="molecule type" value="Genomic_DNA"/>
</dbReference>
<dbReference type="EMBL" id="CP002686">
    <property type="protein sequence ID" value="AEE74384.1"/>
    <property type="molecule type" value="Genomic_DNA"/>
</dbReference>
<dbReference type="EMBL" id="BT026465">
    <property type="protein sequence ID" value="ABH04572.1"/>
    <property type="molecule type" value="mRNA"/>
</dbReference>
<dbReference type="RefSeq" id="NP_187289.1">
    <property type="nucleotide sequence ID" value="NM_111513.4"/>
</dbReference>
<dbReference type="SMR" id="Q9SQU1"/>
<dbReference type="BioGRID" id="5147">
    <property type="interactions" value="6"/>
</dbReference>
<dbReference type="FunCoup" id="Q9SQU1">
    <property type="interactions" value="851"/>
</dbReference>
<dbReference type="IntAct" id="Q9SQU1">
    <property type="interactions" value="4"/>
</dbReference>
<dbReference type="STRING" id="3702.Q9SQU1"/>
<dbReference type="PaxDb" id="3702-AT3G06380.1"/>
<dbReference type="EnsemblPlants" id="AT3G06380.1">
    <property type="protein sequence ID" value="AT3G06380.1"/>
    <property type="gene ID" value="AT3G06380"/>
</dbReference>
<dbReference type="GeneID" id="819812"/>
<dbReference type="Gramene" id="AT3G06380.1">
    <property type="protein sequence ID" value="AT3G06380.1"/>
    <property type="gene ID" value="AT3G06380"/>
</dbReference>
<dbReference type="KEGG" id="ath:AT3G06380"/>
<dbReference type="Araport" id="AT3G06380"/>
<dbReference type="TAIR" id="AT3G06380">
    <property type="gene designation" value="TLP9"/>
</dbReference>
<dbReference type="eggNOG" id="KOG2502">
    <property type="taxonomic scope" value="Eukaryota"/>
</dbReference>
<dbReference type="HOGENOM" id="CLU_028236_3_0_1"/>
<dbReference type="InParanoid" id="Q9SQU1"/>
<dbReference type="OrthoDB" id="8775810at2759"/>
<dbReference type="PhylomeDB" id="Q9SQU1"/>
<dbReference type="UniPathway" id="UPA00143"/>
<dbReference type="PRO" id="PR:Q9SQU1"/>
<dbReference type="Proteomes" id="UP000006548">
    <property type="component" value="Chromosome 3"/>
</dbReference>
<dbReference type="ExpressionAtlas" id="Q9SQU1">
    <property type="expression patterns" value="baseline and differential"/>
</dbReference>
<dbReference type="GO" id="GO:0005886">
    <property type="term" value="C:plasma membrane"/>
    <property type="evidence" value="ECO:0000314"/>
    <property type="project" value="TAIR"/>
</dbReference>
<dbReference type="GO" id="GO:0000976">
    <property type="term" value="F:transcription cis-regulatory region binding"/>
    <property type="evidence" value="ECO:0000353"/>
    <property type="project" value="TAIR"/>
</dbReference>
<dbReference type="GO" id="GO:0009738">
    <property type="term" value="P:abscisic acid-activated signaling pathway"/>
    <property type="evidence" value="ECO:0007669"/>
    <property type="project" value="UniProtKB-KW"/>
</dbReference>
<dbReference type="GO" id="GO:0016567">
    <property type="term" value="P:protein ubiquitination"/>
    <property type="evidence" value="ECO:0007669"/>
    <property type="project" value="UniProtKB-UniPathway"/>
</dbReference>
<dbReference type="GO" id="GO:0006355">
    <property type="term" value="P:regulation of DNA-templated transcription"/>
    <property type="evidence" value="ECO:0000304"/>
    <property type="project" value="TAIR"/>
</dbReference>
<dbReference type="GO" id="GO:0009620">
    <property type="term" value="P:response to fungus"/>
    <property type="evidence" value="ECO:0000315"/>
    <property type="project" value="TAIR"/>
</dbReference>
<dbReference type="CDD" id="cd22153">
    <property type="entry name" value="F-box_AtTLP-like"/>
    <property type="match status" value="1"/>
</dbReference>
<dbReference type="FunFam" id="3.20.90.10:FF:000003">
    <property type="entry name" value="Tubby-like F-box protein"/>
    <property type="match status" value="1"/>
</dbReference>
<dbReference type="Gene3D" id="1.20.1280.50">
    <property type="match status" value="1"/>
</dbReference>
<dbReference type="Gene3D" id="3.20.90.10">
    <property type="entry name" value="Tubby Protein, Chain A"/>
    <property type="match status" value="1"/>
</dbReference>
<dbReference type="InterPro" id="IPR036047">
    <property type="entry name" value="F-box-like_dom_sf"/>
</dbReference>
<dbReference type="InterPro" id="IPR001810">
    <property type="entry name" value="F-box_dom"/>
</dbReference>
<dbReference type="InterPro" id="IPR025659">
    <property type="entry name" value="Tubby-like_C"/>
</dbReference>
<dbReference type="InterPro" id="IPR000007">
    <property type="entry name" value="Tubby_C"/>
</dbReference>
<dbReference type="InterPro" id="IPR018066">
    <property type="entry name" value="Tubby_C_CS"/>
</dbReference>
<dbReference type="PANTHER" id="PTHR16517:SF158">
    <property type="entry name" value="TUBBY-LIKE F-BOX PROTEIN 9"/>
    <property type="match status" value="1"/>
</dbReference>
<dbReference type="PANTHER" id="PTHR16517">
    <property type="entry name" value="TUBBY-RELATED"/>
    <property type="match status" value="1"/>
</dbReference>
<dbReference type="Pfam" id="PF00646">
    <property type="entry name" value="F-box"/>
    <property type="match status" value="1"/>
</dbReference>
<dbReference type="Pfam" id="PF01167">
    <property type="entry name" value="Tub"/>
    <property type="match status" value="1"/>
</dbReference>
<dbReference type="PRINTS" id="PR01573">
    <property type="entry name" value="SUPERTUBBY"/>
</dbReference>
<dbReference type="SUPFAM" id="SSF81383">
    <property type="entry name" value="F-box domain"/>
    <property type="match status" value="1"/>
</dbReference>
<dbReference type="SUPFAM" id="SSF54518">
    <property type="entry name" value="Tubby C-terminal domain-like"/>
    <property type="match status" value="1"/>
</dbReference>
<dbReference type="PROSITE" id="PS01200">
    <property type="entry name" value="TUB_1"/>
    <property type="match status" value="1"/>
</dbReference>
<evidence type="ECO:0000255" key="1">
    <source>
        <dbReference type="PROSITE-ProRule" id="PRU00080"/>
    </source>
</evidence>
<evidence type="ECO:0000256" key="2">
    <source>
        <dbReference type="SAM" id="MobiDB-lite"/>
    </source>
</evidence>
<evidence type="ECO:0000269" key="3">
    <source>
    </source>
</evidence>
<evidence type="ECO:0000269" key="4">
    <source>
    </source>
</evidence>
<evidence type="ECO:0000303" key="5">
    <source>
    </source>
</evidence>
<evidence type="ECO:0000305" key="6"/>
<evidence type="ECO:0000312" key="7">
    <source>
        <dbReference type="Araport" id="AT3G06380"/>
    </source>
</evidence>
<evidence type="ECO:0000312" key="8">
    <source>
        <dbReference type="EMBL" id="AAF08576.1"/>
    </source>
</evidence>
<keyword id="KW-0938">Abscisic acid signaling pathway</keyword>
<keyword id="KW-1185">Reference proteome</keyword>
<keyword id="KW-0833">Ubl conjugation pathway</keyword>
<comment type="function">
    <text evidence="3">Component of SCF(ASK-cullin-F-box) E3 ubiquitin ligase complexes, which may mediate the ubiquitination and subsequent proteasomal degradation of target proteins. Confers sensitivity to ABA during seed germination and early seedling development.</text>
</comment>
<comment type="pathway">
    <text>Protein modification; protein ubiquitination.</text>
</comment>
<comment type="subunit">
    <text evidence="3 4">Part of a SCF (SKP1-cullin-F-box) protein ligase complex. Interacts with SKP1A/ASK1 and XERICO.</text>
</comment>
<comment type="tissue specificity">
    <text evidence="3">Ubiquitous.</text>
</comment>
<comment type="developmental stage">
    <text evidence="3">Expressed early during seed germination, especially in the preemergent radicle.</text>
</comment>
<comment type="induction">
    <text evidence="3">During imbibition of seeds.</text>
</comment>
<comment type="similarity">
    <text evidence="6">Belongs to the TUB family.</text>
</comment>
<accession>Q9SQU1</accession>
<name>TLP9_ARATH</name>
<organism>
    <name type="scientific">Arabidopsis thaliana</name>
    <name type="common">Mouse-ear cress</name>
    <dbReference type="NCBI Taxonomy" id="3702"/>
    <lineage>
        <taxon>Eukaryota</taxon>
        <taxon>Viridiplantae</taxon>
        <taxon>Streptophyta</taxon>
        <taxon>Embryophyta</taxon>
        <taxon>Tracheophyta</taxon>
        <taxon>Spermatophyta</taxon>
        <taxon>Magnoliopsida</taxon>
        <taxon>eudicotyledons</taxon>
        <taxon>Gunneridae</taxon>
        <taxon>Pentapetalae</taxon>
        <taxon>rosids</taxon>
        <taxon>malvids</taxon>
        <taxon>Brassicales</taxon>
        <taxon>Brassicaceae</taxon>
        <taxon>Camelineae</taxon>
        <taxon>Arabidopsis</taxon>
    </lineage>
</organism>
<protein>
    <recommendedName>
        <fullName evidence="5">Tubby-like F-box protein 9</fullName>
        <shortName evidence="5">AtTLP9</shortName>
    </recommendedName>
</protein>
<sequence length="380" mass="42310">MTFRSLLQEMRSRPHRVVHAAASTANSSDPFSWSELPEELLREILIRVETVDGGDWPSRRNVVACAGVCRSWRILTKEIVAVPEFSSKLTFPISLKQSGPRDSLVQCFIKRNRNTQSYHLYLGLTTSLTDNGKFLLAASKLKRATCTDYIISLRSDDISKRSNAYLGRMRSNFLGTKFTVFDGSQTGAAKMQKSRSSNFIKVSPRVPQGSYPIAHISYELNVLGSRGPRRMRCIMDTIPMSIVESRGVVASTSISSFSSRSSPVFRSHSKPLRSNSASCSDSGNNLGDPPLVLSNKAPRWHEQLRCWCLNFHGRVTVASVKNFQLVAVSDCEAGQTSERIILQFGKVGKDMFTMDYGYPISAFQAFAICLSSFETRIACE</sequence>
<gene>
    <name evidence="6" type="primary">TULP9</name>
    <name evidence="5" type="synonym">TLP9</name>
    <name evidence="7" type="ordered locus">At3g06380</name>
    <name evidence="8" type="ORF">F24P17.15</name>
</gene>
<feature type="chain" id="PRO_0000272237" description="Tubby-like F-box protein 9">
    <location>
        <begin position="1"/>
        <end position="380"/>
    </location>
</feature>
<feature type="domain" description="F-box" evidence="1">
    <location>
        <begin position="30"/>
        <end position="76"/>
    </location>
</feature>
<feature type="region of interest" description="Disordered" evidence="2">
    <location>
        <begin position="258"/>
        <end position="283"/>
    </location>
</feature>
<feature type="compositionally biased region" description="Polar residues" evidence="2">
    <location>
        <begin position="272"/>
        <end position="283"/>
    </location>
</feature>
<proteinExistence type="evidence at protein level"/>
<reference key="1">
    <citation type="journal article" date="2004" name="Plant Physiol.">
        <title>Molecular analyses of the Arabidopsis TUBBY-like protein gene family.</title>
        <authorList>
            <person name="Lai C.-P."/>
            <person name="Lee C.-L."/>
            <person name="Chen P.-H."/>
            <person name="Wu S.-H."/>
            <person name="Yang C.-C."/>
            <person name="Shaw J.-F."/>
        </authorList>
    </citation>
    <scope>NUCLEOTIDE SEQUENCE [MRNA]</scope>
    <scope>FUNCTION</scope>
    <scope>TISSUE SPECIFICITY</scope>
    <scope>DEVELOPMENTAL STAGE</scope>
    <scope>INDUCTION</scope>
    <scope>INTERACTION WITH SKP1A/ASK1</scope>
    <scope>GENE FAMILY</scope>
    <scope>NOMENCLATURE</scope>
</reference>
<reference key="2">
    <citation type="journal article" date="2000" name="Nature">
        <title>Sequence and analysis of chromosome 3 of the plant Arabidopsis thaliana.</title>
        <authorList>
            <person name="Salanoubat M."/>
            <person name="Lemcke K."/>
            <person name="Rieger M."/>
            <person name="Ansorge W."/>
            <person name="Unseld M."/>
            <person name="Fartmann B."/>
            <person name="Valle G."/>
            <person name="Bloecker H."/>
            <person name="Perez-Alonso M."/>
            <person name="Obermaier B."/>
            <person name="Delseny M."/>
            <person name="Boutry M."/>
            <person name="Grivell L.A."/>
            <person name="Mache R."/>
            <person name="Puigdomenech P."/>
            <person name="De Simone V."/>
            <person name="Choisne N."/>
            <person name="Artiguenave F."/>
            <person name="Robert C."/>
            <person name="Brottier P."/>
            <person name="Wincker P."/>
            <person name="Cattolico L."/>
            <person name="Weissenbach J."/>
            <person name="Saurin W."/>
            <person name="Quetier F."/>
            <person name="Schaefer M."/>
            <person name="Mueller-Auer S."/>
            <person name="Gabel C."/>
            <person name="Fuchs M."/>
            <person name="Benes V."/>
            <person name="Wurmbach E."/>
            <person name="Drzonek H."/>
            <person name="Erfle H."/>
            <person name="Jordan N."/>
            <person name="Bangert S."/>
            <person name="Wiedelmann R."/>
            <person name="Kranz H."/>
            <person name="Voss H."/>
            <person name="Holland R."/>
            <person name="Brandt P."/>
            <person name="Nyakatura G."/>
            <person name="Vezzi A."/>
            <person name="D'Angelo M."/>
            <person name="Pallavicini A."/>
            <person name="Toppo S."/>
            <person name="Simionati B."/>
            <person name="Conrad A."/>
            <person name="Hornischer K."/>
            <person name="Kauer G."/>
            <person name="Loehnert T.-H."/>
            <person name="Nordsiek G."/>
            <person name="Reichelt J."/>
            <person name="Scharfe M."/>
            <person name="Schoen O."/>
            <person name="Bargues M."/>
            <person name="Terol J."/>
            <person name="Climent J."/>
            <person name="Navarro P."/>
            <person name="Collado C."/>
            <person name="Perez-Perez A."/>
            <person name="Ottenwaelder B."/>
            <person name="Duchemin D."/>
            <person name="Cooke R."/>
            <person name="Laudie M."/>
            <person name="Berger-Llauro C."/>
            <person name="Purnelle B."/>
            <person name="Masuy D."/>
            <person name="de Haan M."/>
            <person name="Maarse A.C."/>
            <person name="Alcaraz J.-P."/>
            <person name="Cottet A."/>
            <person name="Casacuberta E."/>
            <person name="Monfort A."/>
            <person name="Argiriou A."/>
            <person name="Flores M."/>
            <person name="Liguori R."/>
            <person name="Vitale D."/>
            <person name="Mannhaupt G."/>
            <person name="Haase D."/>
            <person name="Schoof H."/>
            <person name="Rudd S."/>
            <person name="Zaccaria P."/>
            <person name="Mewes H.-W."/>
            <person name="Mayer K.F.X."/>
            <person name="Kaul S."/>
            <person name="Town C.D."/>
            <person name="Koo H.L."/>
            <person name="Tallon L.J."/>
            <person name="Jenkins J."/>
            <person name="Rooney T."/>
            <person name="Rizzo M."/>
            <person name="Walts A."/>
            <person name="Utterback T."/>
            <person name="Fujii C.Y."/>
            <person name="Shea T.P."/>
            <person name="Creasy T.H."/>
            <person name="Haas B."/>
            <person name="Maiti R."/>
            <person name="Wu D."/>
            <person name="Peterson J."/>
            <person name="Van Aken S."/>
            <person name="Pai G."/>
            <person name="Militscher J."/>
            <person name="Sellers P."/>
            <person name="Gill J.E."/>
            <person name="Feldblyum T.V."/>
            <person name="Preuss D."/>
            <person name="Lin X."/>
            <person name="Nierman W.C."/>
            <person name="Salzberg S.L."/>
            <person name="White O."/>
            <person name="Venter J.C."/>
            <person name="Fraser C.M."/>
            <person name="Kaneko T."/>
            <person name="Nakamura Y."/>
            <person name="Sato S."/>
            <person name="Kato T."/>
            <person name="Asamizu E."/>
            <person name="Sasamoto S."/>
            <person name="Kimura T."/>
            <person name="Idesawa K."/>
            <person name="Kawashima K."/>
            <person name="Kishida Y."/>
            <person name="Kiyokawa C."/>
            <person name="Kohara M."/>
            <person name="Matsumoto M."/>
            <person name="Matsuno A."/>
            <person name="Muraki A."/>
            <person name="Nakayama S."/>
            <person name="Nakazaki N."/>
            <person name="Shinpo S."/>
            <person name="Takeuchi C."/>
            <person name="Wada T."/>
            <person name="Watanabe A."/>
            <person name="Yamada M."/>
            <person name="Yasuda M."/>
            <person name="Tabata S."/>
        </authorList>
    </citation>
    <scope>NUCLEOTIDE SEQUENCE [LARGE SCALE GENOMIC DNA]</scope>
    <source>
        <strain>cv. Columbia</strain>
    </source>
</reference>
<reference key="3">
    <citation type="journal article" date="2017" name="Plant J.">
        <title>Araport11: a complete reannotation of the Arabidopsis thaliana reference genome.</title>
        <authorList>
            <person name="Cheng C.Y."/>
            <person name="Krishnakumar V."/>
            <person name="Chan A.P."/>
            <person name="Thibaud-Nissen F."/>
            <person name="Schobel S."/>
            <person name="Town C.D."/>
        </authorList>
    </citation>
    <scope>GENOME REANNOTATION</scope>
    <source>
        <strain>cv. Columbia</strain>
    </source>
</reference>
<reference key="4">
    <citation type="submission" date="2006-08" db="EMBL/GenBank/DDBJ databases">
        <title>Arabidopsis ORF clones.</title>
        <authorList>
            <person name="Quinitio C."/>
            <person name="Chen H."/>
            <person name="Kim C.J."/>
            <person name="Shinn P."/>
            <person name="Ecker J.R."/>
        </authorList>
    </citation>
    <scope>NUCLEOTIDE SEQUENCE [LARGE SCALE MRNA]</scope>
    <source>
        <strain>cv. Columbia</strain>
    </source>
</reference>
<reference key="5">
    <citation type="journal article" date="2006" name="Plant J.">
        <title>Upregulation of an Arabidopsis RING-H2 gene, XERICO, confers drought tolerance through increased abscisic acid biosynthesis.</title>
        <authorList>
            <person name="Ko J.-H."/>
            <person name="Yang S.H."/>
            <person name="Han K.-H."/>
        </authorList>
    </citation>
    <scope>INTERACTION WITH XERICO</scope>
</reference>